<dbReference type="EMBL" id="CU329670">
    <property type="protein sequence ID" value="CAB11226.1"/>
    <property type="molecule type" value="Genomic_DNA"/>
</dbReference>
<dbReference type="PIR" id="T37882">
    <property type="entry name" value="T37882"/>
</dbReference>
<dbReference type="RefSeq" id="NP_593586.1">
    <property type="nucleotide sequence ID" value="NM_001019018.2"/>
</dbReference>
<dbReference type="SMR" id="O13814"/>
<dbReference type="BioGRID" id="278847">
    <property type="interactions" value="2"/>
</dbReference>
<dbReference type="FunCoup" id="O13814">
    <property type="interactions" value="59"/>
</dbReference>
<dbReference type="IntAct" id="O13814">
    <property type="interactions" value="2"/>
</dbReference>
<dbReference type="STRING" id="284812.O13814"/>
<dbReference type="SwissPalm" id="O13814"/>
<dbReference type="PaxDb" id="4896-SPAC17H9.17c.1"/>
<dbReference type="EnsemblFungi" id="SPAC17H9.17c.1">
    <property type="protein sequence ID" value="SPAC17H9.17c.1:pep"/>
    <property type="gene ID" value="SPAC17H9.17c"/>
</dbReference>
<dbReference type="GeneID" id="2542383"/>
<dbReference type="KEGG" id="spo:2542383"/>
<dbReference type="PomBase" id="SPAC17H9.17c">
    <property type="gene designation" value="mdm10"/>
</dbReference>
<dbReference type="VEuPathDB" id="FungiDB:SPAC17H9.17c"/>
<dbReference type="eggNOG" id="ENOG502QUN5">
    <property type="taxonomic scope" value="Eukaryota"/>
</dbReference>
<dbReference type="HOGENOM" id="CLU_026505_0_0_1"/>
<dbReference type="InParanoid" id="O13814"/>
<dbReference type="OMA" id="VPGYRQI"/>
<dbReference type="PhylomeDB" id="O13814"/>
<dbReference type="PRO" id="PR:O13814"/>
<dbReference type="Proteomes" id="UP000002485">
    <property type="component" value="Chromosome I"/>
</dbReference>
<dbReference type="GO" id="GO:0032865">
    <property type="term" value="C:ERMES complex"/>
    <property type="evidence" value="ECO:0000318"/>
    <property type="project" value="GO_Central"/>
</dbReference>
<dbReference type="GO" id="GO:0005739">
    <property type="term" value="C:mitochondrion"/>
    <property type="evidence" value="ECO:0007005"/>
    <property type="project" value="PomBase"/>
</dbReference>
<dbReference type="GO" id="GO:0001401">
    <property type="term" value="C:SAM complex"/>
    <property type="evidence" value="ECO:0000318"/>
    <property type="project" value="GO_Central"/>
</dbReference>
<dbReference type="GO" id="GO:0120014">
    <property type="term" value="F:phospholipid transfer activity"/>
    <property type="evidence" value="ECO:0000305"/>
    <property type="project" value="PomBase"/>
</dbReference>
<dbReference type="GO" id="GO:0051654">
    <property type="term" value="P:establishment of mitochondrion localization"/>
    <property type="evidence" value="ECO:0000318"/>
    <property type="project" value="GO_Central"/>
</dbReference>
<dbReference type="GO" id="GO:0120010">
    <property type="term" value="P:intermembrane phospholipid transfer"/>
    <property type="evidence" value="ECO:0000305"/>
    <property type="project" value="PomBase"/>
</dbReference>
<dbReference type="GO" id="GO:0000002">
    <property type="term" value="P:mitochondrial genome maintenance"/>
    <property type="evidence" value="ECO:0007669"/>
    <property type="project" value="UniProtKB-UniRule"/>
</dbReference>
<dbReference type="GO" id="GO:0070096">
    <property type="term" value="P:mitochondrial outer membrane translocase complex assembly"/>
    <property type="evidence" value="ECO:0000318"/>
    <property type="project" value="GO_Central"/>
</dbReference>
<dbReference type="GO" id="GO:1990456">
    <property type="term" value="P:mitochondrion-endoplasmic reticulum membrane tethering"/>
    <property type="evidence" value="ECO:0000318"/>
    <property type="project" value="GO_Central"/>
</dbReference>
<dbReference type="GO" id="GO:0015914">
    <property type="term" value="P:phospholipid transport"/>
    <property type="evidence" value="ECO:0000318"/>
    <property type="project" value="GO_Central"/>
</dbReference>
<dbReference type="GO" id="GO:0045040">
    <property type="term" value="P:protein insertion into mitochondrial outer membrane"/>
    <property type="evidence" value="ECO:0000318"/>
    <property type="project" value="GO_Central"/>
</dbReference>
<dbReference type="HAMAP" id="MF_03102">
    <property type="entry name" value="Mdm10"/>
    <property type="match status" value="1"/>
</dbReference>
<dbReference type="InterPro" id="IPR027539">
    <property type="entry name" value="Mdm10"/>
</dbReference>
<dbReference type="PANTHER" id="PTHR28035">
    <property type="entry name" value="MITOCHONDRIAL DISTRIBUTION AND MORPHOLOGY PROTEIN 10"/>
    <property type="match status" value="1"/>
</dbReference>
<dbReference type="PANTHER" id="PTHR28035:SF1">
    <property type="entry name" value="MITOCHONDRIAL DISTRIBUTION AND MORPHOLOGY PROTEIN 10"/>
    <property type="match status" value="1"/>
</dbReference>
<dbReference type="Pfam" id="PF12519">
    <property type="entry name" value="MDM10"/>
    <property type="match status" value="1"/>
</dbReference>
<gene>
    <name type="primary">mdm10</name>
    <name type="ORF">SPAC17H9.17c</name>
</gene>
<comment type="function">
    <text evidence="1">Component of the ERMES/MDM complex, which serves as a molecular tether to connect the endoplasmic reticulum and mitochondria. Components of this complex are involved in the control of mitochondrial shape and protein biogenesis and may function in phospholipid exchange. mdm10 is involved in the late assembly steps of the general translocase of the mitochondrial outer membrane (TOM complex). Functions in the tom40-specific route of the assembly of outer membrane beta-barrel proteins, including the association of tom40 with the receptor tom22 and small TOM proteins. Can associate with the SAM(core) complex as well as the mdm12-mmm1 complex, both involved in late steps of the major beta-barrel assembly pathway, that is responsible for biogenesis of all outer membrane beta-barrel proteins. May act as a switch that shuttles between both complexes and channels precursor proteins into the tom40-specific pathway. Plays a role in mitochondrial morphology and in the inheritance of mitochondria.</text>
</comment>
<comment type="subunit">
    <text evidence="1">Component of the ER-mitochondria encounter structure (ERMES) or MDM complex, composed of mmm1, mdm10, mdm12 and mdm34. Associates with the mitochondrial outer membrane sorting assembly machinery SAM(core) complex.</text>
</comment>
<comment type="interaction">
    <interactant intactId="EBI-849180">
        <id>O13814</id>
    </interactant>
    <interactant intactId="EBI-455823">
        <id>P28040</id>
        <label>pol1</label>
    </interactant>
    <organismsDiffer>false</organismsDiffer>
    <experiments>2</experiments>
</comment>
<comment type="subcellular location">
    <subcellularLocation>
        <location evidence="1">Mitochondrion outer membrane</location>
        <topology evidence="1">Multi-pass membrane protein</topology>
    </subcellularLocation>
    <text evidence="1">The ERMES/MDM complex localizes to a few discrete foci (around 10 per single cell), that represent mitochondria-endoplasmic reticulum junctions. These foci are often found next to mtDNA nucleoids.</text>
</comment>
<comment type="domain">
    <text>Lacks alpha-helical transmembrane segments, suggesting that it resides in the membrane via beta-sheet conformations similar to those predicted for other outer membrane proteins and porin.</text>
</comment>
<comment type="similarity">
    <text evidence="1">Belongs to the MDM10 family.</text>
</comment>
<accession>O13814</accession>
<feature type="chain" id="PRO_0000372307" description="Mitochondrial distribution and morphology protein 10">
    <location>
        <begin position="1"/>
        <end position="370"/>
    </location>
</feature>
<proteinExistence type="evidence at protein level"/>
<sequence>MMSFNDYIFYEYLKKTNWNIHNLYCNLTQTADNILNFEIPSGVSCQLSSLTSSNFASGCKISAMPILNGSMSYVYTNVNLENLNRNITYNLQHFYEGYKHVDVPFVHYVNEFQDKKLPLRPTLLYGRMHLPSQHLDAIFATRLSPWLLFFIQGVNEIEDGVGDNLCFNWQYDTGKRCLEFVYESSGAMLGVRGLWNLNYRELNTKINMENKAPSNMRWSLGFETYYGVLTKCAGASLGMRLHSGPSHPYAPFILTCTLNPIVGHITSTFSTAEPRTKAFSAQYDFNIYSYESQLKLGIELWRSKQEMSQSTNDPTANSMSSLLKGTCSTSGDVSISWQARIRNFLLTIGTEAQLTKIDPLFFGVHFEYSK</sequence>
<reference key="1">
    <citation type="journal article" date="2002" name="Nature">
        <title>The genome sequence of Schizosaccharomyces pombe.</title>
        <authorList>
            <person name="Wood V."/>
            <person name="Gwilliam R."/>
            <person name="Rajandream M.A."/>
            <person name="Lyne M.H."/>
            <person name="Lyne R."/>
            <person name="Stewart A."/>
            <person name="Sgouros J.G."/>
            <person name="Peat N."/>
            <person name="Hayles J."/>
            <person name="Baker S.G."/>
            <person name="Basham D."/>
            <person name="Bowman S."/>
            <person name="Brooks K."/>
            <person name="Brown D."/>
            <person name="Brown S."/>
            <person name="Chillingworth T."/>
            <person name="Churcher C.M."/>
            <person name="Collins M."/>
            <person name="Connor R."/>
            <person name="Cronin A."/>
            <person name="Davis P."/>
            <person name="Feltwell T."/>
            <person name="Fraser A."/>
            <person name="Gentles S."/>
            <person name="Goble A."/>
            <person name="Hamlin N."/>
            <person name="Harris D.E."/>
            <person name="Hidalgo J."/>
            <person name="Hodgson G."/>
            <person name="Holroyd S."/>
            <person name="Hornsby T."/>
            <person name="Howarth S."/>
            <person name="Huckle E.J."/>
            <person name="Hunt S."/>
            <person name="Jagels K."/>
            <person name="James K.D."/>
            <person name="Jones L."/>
            <person name="Jones M."/>
            <person name="Leather S."/>
            <person name="McDonald S."/>
            <person name="McLean J."/>
            <person name="Mooney P."/>
            <person name="Moule S."/>
            <person name="Mungall K.L."/>
            <person name="Murphy L.D."/>
            <person name="Niblett D."/>
            <person name="Odell C."/>
            <person name="Oliver K."/>
            <person name="O'Neil S."/>
            <person name="Pearson D."/>
            <person name="Quail M.A."/>
            <person name="Rabbinowitsch E."/>
            <person name="Rutherford K.M."/>
            <person name="Rutter S."/>
            <person name="Saunders D."/>
            <person name="Seeger K."/>
            <person name="Sharp S."/>
            <person name="Skelton J."/>
            <person name="Simmonds M.N."/>
            <person name="Squares R."/>
            <person name="Squares S."/>
            <person name="Stevens K."/>
            <person name="Taylor K."/>
            <person name="Taylor R.G."/>
            <person name="Tivey A."/>
            <person name="Walsh S.V."/>
            <person name="Warren T."/>
            <person name="Whitehead S."/>
            <person name="Woodward J.R."/>
            <person name="Volckaert G."/>
            <person name="Aert R."/>
            <person name="Robben J."/>
            <person name="Grymonprez B."/>
            <person name="Weltjens I."/>
            <person name="Vanstreels E."/>
            <person name="Rieger M."/>
            <person name="Schaefer M."/>
            <person name="Mueller-Auer S."/>
            <person name="Gabel C."/>
            <person name="Fuchs M."/>
            <person name="Duesterhoeft A."/>
            <person name="Fritzc C."/>
            <person name="Holzer E."/>
            <person name="Moestl D."/>
            <person name="Hilbert H."/>
            <person name="Borzym K."/>
            <person name="Langer I."/>
            <person name="Beck A."/>
            <person name="Lehrach H."/>
            <person name="Reinhardt R."/>
            <person name="Pohl T.M."/>
            <person name="Eger P."/>
            <person name="Zimmermann W."/>
            <person name="Wedler H."/>
            <person name="Wambutt R."/>
            <person name="Purnelle B."/>
            <person name="Goffeau A."/>
            <person name="Cadieu E."/>
            <person name="Dreano S."/>
            <person name="Gloux S."/>
            <person name="Lelaure V."/>
            <person name="Mottier S."/>
            <person name="Galibert F."/>
            <person name="Aves S.J."/>
            <person name="Xiang Z."/>
            <person name="Hunt C."/>
            <person name="Moore K."/>
            <person name="Hurst S.M."/>
            <person name="Lucas M."/>
            <person name="Rochet M."/>
            <person name="Gaillardin C."/>
            <person name="Tallada V.A."/>
            <person name="Garzon A."/>
            <person name="Thode G."/>
            <person name="Daga R.R."/>
            <person name="Cruzado L."/>
            <person name="Jimenez J."/>
            <person name="Sanchez M."/>
            <person name="del Rey F."/>
            <person name="Benito J."/>
            <person name="Dominguez A."/>
            <person name="Revuelta J.L."/>
            <person name="Moreno S."/>
            <person name="Armstrong J."/>
            <person name="Forsburg S.L."/>
            <person name="Cerutti L."/>
            <person name="Lowe T."/>
            <person name="McCombie W.R."/>
            <person name="Paulsen I."/>
            <person name="Potashkin J."/>
            <person name="Shpakovski G.V."/>
            <person name="Ussery D."/>
            <person name="Barrell B.G."/>
            <person name="Nurse P."/>
        </authorList>
    </citation>
    <scope>NUCLEOTIDE SEQUENCE [LARGE SCALE GENOMIC DNA]</scope>
    <source>
        <strain>972 / ATCC 24843</strain>
    </source>
</reference>
<protein>
    <recommendedName>
        <fullName evidence="1">Mitochondrial distribution and morphology protein 10</fullName>
    </recommendedName>
    <alternativeName>
        <fullName evidence="1">Mitochondrial inheritance component mdm10</fullName>
    </alternativeName>
</protein>
<keyword id="KW-0472">Membrane</keyword>
<keyword id="KW-0496">Mitochondrion</keyword>
<keyword id="KW-1000">Mitochondrion outer membrane</keyword>
<keyword id="KW-1185">Reference proteome</keyword>
<keyword id="KW-0812">Transmembrane</keyword>
<keyword id="KW-1134">Transmembrane beta strand</keyword>
<name>MDM10_SCHPO</name>
<organism>
    <name type="scientific">Schizosaccharomyces pombe (strain 972 / ATCC 24843)</name>
    <name type="common">Fission yeast</name>
    <dbReference type="NCBI Taxonomy" id="284812"/>
    <lineage>
        <taxon>Eukaryota</taxon>
        <taxon>Fungi</taxon>
        <taxon>Dikarya</taxon>
        <taxon>Ascomycota</taxon>
        <taxon>Taphrinomycotina</taxon>
        <taxon>Schizosaccharomycetes</taxon>
        <taxon>Schizosaccharomycetales</taxon>
        <taxon>Schizosaccharomycetaceae</taxon>
        <taxon>Schizosaccharomyces</taxon>
    </lineage>
</organism>
<evidence type="ECO:0000255" key="1">
    <source>
        <dbReference type="HAMAP-Rule" id="MF_03102"/>
    </source>
</evidence>